<comment type="function">
    <text evidence="1">Involved in mRNA degradation. Catalyzes the phosphorolysis of single-stranded polyribonucleotides processively in the 3'- to 5'-direction.</text>
</comment>
<comment type="catalytic activity">
    <reaction evidence="1">
        <text>RNA(n+1) + phosphate = RNA(n) + a ribonucleoside 5'-diphosphate</text>
        <dbReference type="Rhea" id="RHEA:22096"/>
        <dbReference type="Rhea" id="RHEA-COMP:14527"/>
        <dbReference type="Rhea" id="RHEA-COMP:17342"/>
        <dbReference type="ChEBI" id="CHEBI:43474"/>
        <dbReference type="ChEBI" id="CHEBI:57930"/>
        <dbReference type="ChEBI" id="CHEBI:140395"/>
        <dbReference type="EC" id="2.7.7.8"/>
    </reaction>
</comment>
<comment type="cofactor">
    <cofactor evidence="1">
        <name>Mg(2+)</name>
        <dbReference type="ChEBI" id="CHEBI:18420"/>
    </cofactor>
</comment>
<comment type="subcellular location">
    <subcellularLocation>
        <location evidence="1">Cytoplasm</location>
    </subcellularLocation>
</comment>
<comment type="similarity">
    <text evidence="1">Belongs to the polyribonucleotide nucleotidyltransferase family.</text>
</comment>
<dbReference type="EC" id="2.7.7.8" evidence="1"/>
<dbReference type="EMBL" id="AP009178">
    <property type="protein sequence ID" value="BAF70441.1"/>
    <property type="molecule type" value="Genomic_DNA"/>
</dbReference>
<dbReference type="RefSeq" id="WP_012082704.1">
    <property type="nucleotide sequence ID" value="NC_009662.1"/>
</dbReference>
<dbReference type="SMR" id="A6Q4N2"/>
<dbReference type="FunCoup" id="A6Q4N2">
    <property type="interactions" value="460"/>
</dbReference>
<dbReference type="STRING" id="387092.NIS_1333"/>
<dbReference type="KEGG" id="nis:NIS_1333"/>
<dbReference type="eggNOG" id="COG1185">
    <property type="taxonomic scope" value="Bacteria"/>
</dbReference>
<dbReference type="HOGENOM" id="CLU_004217_2_2_7"/>
<dbReference type="InParanoid" id="A6Q4N2"/>
<dbReference type="OrthoDB" id="9804305at2"/>
<dbReference type="Proteomes" id="UP000001118">
    <property type="component" value="Chromosome"/>
</dbReference>
<dbReference type="GO" id="GO:0005829">
    <property type="term" value="C:cytosol"/>
    <property type="evidence" value="ECO:0007669"/>
    <property type="project" value="TreeGrafter"/>
</dbReference>
<dbReference type="GO" id="GO:0000175">
    <property type="term" value="F:3'-5'-RNA exonuclease activity"/>
    <property type="evidence" value="ECO:0007669"/>
    <property type="project" value="TreeGrafter"/>
</dbReference>
<dbReference type="GO" id="GO:0000287">
    <property type="term" value="F:magnesium ion binding"/>
    <property type="evidence" value="ECO:0007669"/>
    <property type="project" value="UniProtKB-UniRule"/>
</dbReference>
<dbReference type="GO" id="GO:0004654">
    <property type="term" value="F:polyribonucleotide nucleotidyltransferase activity"/>
    <property type="evidence" value="ECO:0007669"/>
    <property type="project" value="UniProtKB-UniRule"/>
</dbReference>
<dbReference type="GO" id="GO:0003723">
    <property type="term" value="F:RNA binding"/>
    <property type="evidence" value="ECO:0007669"/>
    <property type="project" value="UniProtKB-UniRule"/>
</dbReference>
<dbReference type="GO" id="GO:0006402">
    <property type="term" value="P:mRNA catabolic process"/>
    <property type="evidence" value="ECO:0007669"/>
    <property type="project" value="UniProtKB-UniRule"/>
</dbReference>
<dbReference type="GO" id="GO:0006396">
    <property type="term" value="P:RNA processing"/>
    <property type="evidence" value="ECO:0007669"/>
    <property type="project" value="InterPro"/>
</dbReference>
<dbReference type="CDD" id="cd02393">
    <property type="entry name" value="KH-I_PNPase"/>
    <property type="match status" value="1"/>
</dbReference>
<dbReference type="CDD" id="cd11364">
    <property type="entry name" value="RNase_PH_PNPase_2"/>
    <property type="match status" value="1"/>
</dbReference>
<dbReference type="CDD" id="cd05688">
    <property type="entry name" value="S1_RPS1_repeat_ec3"/>
    <property type="match status" value="1"/>
</dbReference>
<dbReference type="FunFam" id="3.30.1370.10:FF:000001">
    <property type="entry name" value="Polyribonucleotide nucleotidyltransferase"/>
    <property type="match status" value="1"/>
</dbReference>
<dbReference type="FunFam" id="3.30.230.70:FF:000026">
    <property type="entry name" value="Polyribonucleotide nucleotidyltransferase"/>
    <property type="match status" value="1"/>
</dbReference>
<dbReference type="FunFam" id="3.30.230.70:FF:000029">
    <property type="entry name" value="Polyribonucleotide nucleotidyltransferase"/>
    <property type="match status" value="1"/>
</dbReference>
<dbReference type="Gene3D" id="3.30.230.70">
    <property type="entry name" value="GHMP Kinase, N-terminal domain"/>
    <property type="match status" value="2"/>
</dbReference>
<dbReference type="Gene3D" id="3.30.1370.10">
    <property type="entry name" value="K Homology domain, type 1"/>
    <property type="match status" value="1"/>
</dbReference>
<dbReference type="Gene3D" id="2.40.50.140">
    <property type="entry name" value="Nucleic acid-binding proteins"/>
    <property type="match status" value="1"/>
</dbReference>
<dbReference type="HAMAP" id="MF_01595">
    <property type="entry name" value="PNPase"/>
    <property type="match status" value="1"/>
</dbReference>
<dbReference type="InterPro" id="IPR001247">
    <property type="entry name" value="ExoRNase_PH_dom1"/>
</dbReference>
<dbReference type="InterPro" id="IPR015847">
    <property type="entry name" value="ExoRNase_PH_dom2"/>
</dbReference>
<dbReference type="InterPro" id="IPR036345">
    <property type="entry name" value="ExoRNase_PH_dom2_sf"/>
</dbReference>
<dbReference type="InterPro" id="IPR004087">
    <property type="entry name" value="KH_dom"/>
</dbReference>
<dbReference type="InterPro" id="IPR004088">
    <property type="entry name" value="KH_dom_type_1"/>
</dbReference>
<dbReference type="InterPro" id="IPR036612">
    <property type="entry name" value="KH_dom_type_1_sf"/>
</dbReference>
<dbReference type="InterPro" id="IPR012340">
    <property type="entry name" value="NA-bd_OB-fold"/>
</dbReference>
<dbReference type="InterPro" id="IPR012162">
    <property type="entry name" value="PNPase"/>
</dbReference>
<dbReference type="InterPro" id="IPR027408">
    <property type="entry name" value="PNPase/RNase_PH_dom_sf"/>
</dbReference>
<dbReference type="InterPro" id="IPR015848">
    <property type="entry name" value="PNPase_PH_RNA-bd_bac/org-type"/>
</dbReference>
<dbReference type="InterPro" id="IPR020568">
    <property type="entry name" value="Ribosomal_Su5_D2-typ_SF"/>
</dbReference>
<dbReference type="InterPro" id="IPR003029">
    <property type="entry name" value="S1_domain"/>
</dbReference>
<dbReference type="NCBIfam" id="TIGR03591">
    <property type="entry name" value="polynuc_phos"/>
    <property type="match status" value="1"/>
</dbReference>
<dbReference type="NCBIfam" id="NF008805">
    <property type="entry name" value="PRK11824.1"/>
    <property type="match status" value="1"/>
</dbReference>
<dbReference type="PANTHER" id="PTHR11252">
    <property type="entry name" value="POLYRIBONUCLEOTIDE NUCLEOTIDYLTRANSFERASE"/>
    <property type="match status" value="1"/>
</dbReference>
<dbReference type="PANTHER" id="PTHR11252:SF0">
    <property type="entry name" value="POLYRIBONUCLEOTIDE NUCLEOTIDYLTRANSFERASE 1, MITOCHONDRIAL"/>
    <property type="match status" value="1"/>
</dbReference>
<dbReference type="Pfam" id="PF00013">
    <property type="entry name" value="KH_1"/>
    <property type="match status" value="1"/>
</dbReference>
<dbReference type="Pfam" id="PF03726">
    <property type="entry name" value="PNPase"/>
    <property type="match status" value="1"/>
</dbReference>
<dbReference type="Pfam" id="PF01138">
    <property type="entry name" value="RNase_PH"/>
    <property type="match status" value="2"/>
</dbReference>
<dbReference type="Pfam" id="PF03725">
    <property type="entry name" value="RNase_PH_C"/>
    <property type="match status" value="2"/>
</dbReference>
<dbReference type="Pfam" id="PF00575">
    <property type="entry name" value="S1"/>
    <property type="match status" value="1"/>
</dbReference>
<dbReference type="PIRSF" id="PIRSF005499">
    <property type="entry name" value="PNPase"/>
    <property type="match status" value="1"/>
</dbReference>
<dbReference type="SMART" id="SM00322">
    <property type="entry name" value="KH"/>
    <property type="match status" value="1"/>
</dbReference>
<dbReference type="SMART" id="SM00316">
    <property type="entry name" value="S1"/>
    <property type="match status" value="1"/>
</dbReference>
<dbReference type="SUPFAM" id="SSF54791">
    <property type="entry name" value="Eukaryotic type KH-domain (KH-domain type I)"/>
    <property type="match status" value="1"/>
</dbReference>
<dbReference type="SUPFAM" id="SSF50249">
    <property type="entry name" value="Nucleic acid-binding proteins"/>
    <property type="match status" value="1"/>
</dbReference>
<dbReference type="SUPFAM" id="SSF55666">
    <property type="entry name" value="Ribonuclease PH domain 2-like"/>
    <property type="match status" value="2"/>
</dbReference>
<dbReference type="SUPFAM" id="SSF54211">
    <property type="entry name" value="Ribosomal protein S5 domain 2-like"/>
    <property type="match status" value="2"/>
</dbReference>
<dbReference type="PROSITE" id="PS50084">
    <property type="entry name" value="KH_TYPE_1"/>
    <property type="match status" value="1"/>
</dbReference>
<dbReference type="PROSITE" id="PS50126">
    <property type="entry name" value="S1"/>
    <property type="match status" value="1"/>
</dbReference>
<evidence type="ECO:0000255" key="1">
    <source>
        <dbReference type="HAMAP-Rule" id="MF_01595"/>
    </source>
</evidence>
<name>PNP_NITSB</name>
<gene>
    <name evidence="1" type="primary">pnp</name>
    <name type="ordered locus">NIS_1333</name>
</gene>
<protein>
    <recommendedName>
        <fullName evidence="1">Polyribonucleotide nucleotidyltransferase</fullName>
        <ecNumber evidence="1">2.7.7.8</ecNumber>
    </recommendedName>
    <alternativeName>
        <fullName evidence="1">Polynucleotide phosphorylase</fullName>
        <shortName evidence="1">PNPase</shortName>
    </alternativeName>
</protein>
<proteinExistence type="inferred from homology"/>
<organism>
    <name type="scientific">Nitratiruptor sp. (strain SB155-2)</name>
    <dbReference type="NCBI Taxonomy" id="387092"/>
    <lineage>
        <taxon>Bacteria</taxon>
        <taxon>Pseudomonadati</taxon>
        <taxon>Campylobacterota</taxon>
        <taxon>Epsilonproteobacteria</taxon>
        <taxon>Nautiliales</taxon>
        <taxon>Nitratiruptoraceae</taxon>
        <taxon>Nitratiruptor</taxon>
    </lineage>
</organism>
<keyword id="KW-0963">Cytoplasm</keyword>
<keyword id="KW-0460">Magnesium</keyword>
<keyword id="KW-0479">Metal-binding</keyword>
<keyword id="KW-0548">Nucleotidyltransferase</keyword>
<keyword id="KW-1185">Reference proteome</keyword>
<keyword id="KW-0694">RNA-binding</keyword>
<keyword id="KW-0808">Transferase</keyword>
<sequence>MKCRFEFEMNNLKEIYEFGEVAKQTNGSVLLKSGKTVMLATVVMEKEMVDEDFLPLTVQYIEKSYAAGKIPGGFVKREQKPGDFETLTARIVDRALRPLFPKGYLYPTVITVMVLSADPESDLQVLALNAASAALFVSDIPVRKAVSGLRVAKVDGEVLFNPPLSKLKESTLDLYLAGTKEELLMIEMAAIGSYKTEVVPTTVDPLMDPTLAEEVITIKEPNAMKEEELASIIAQGKDVIQIACNEYEKYFIESAKEQLELELLPQTIDEDIWTYVEEIYAADIKEAVQAMAKSERNELLKEIAKKISEDDVAKEQGWEYETIYKVVEKYKRKIVREMILNEGKRADGRGLKDVRPIDIKTNILPSAHGSCLFTRGETQALVVCTIGEKTDAQMYEMLTSKGPEYEHFMVHYNFPPFSVGEAKPISAPGRRELGHGNLARRALEPVVDVPEDKTYRLVSEILESNGSSSMATVCGGALALKAANIDLADLVAGVAMGLIVEDDKYAILTDIMGLEDHDGDMDFKVAGTHDGVTAMQMDIKLGGVQQEILEQALQQAREARLHILKIMEEAAEKIEINEENLPSSHTITVHPSKIVDIIGQAGKTIKEIIEKFEVSIDIDRDKGKVKVTGKNRPKVIAACDYIQEITNKPKPEPVKFQEGDILKGKIKRTTNFGAFVELPGGVDGLLHISKLSSGRVERVEDVVNIGDEVEVEVLSQKGHKIELGLRQVLKKA</sequence>
<accession>A6Q4N2</accession>
<feature type="chain" id="PRO_0000329733" description="Polyribonucleotide nucleotidyltransferase">
    <location>
        <begin position="1"/>
        <end position="732"/>
    </location>
</feature>
<feature type="domain" description="KH" evidence="1">
    <location>
        <begin position="582"/>
        <end position="642"/>
    </location>
</feature>
<feature type="domain" description="S1 motif" evidence="1">
    <location>
        <begin position="659"/>
        <end position="726"/>
    </location>
</feature>
<feature type="binding site" evidence="1">
    <location>
        <position position="516"/>
    </location>
    <ligand>
        <name>Mg(2+)</name>
        <dbReference type="ChEBI" id="CHEBI:18420"/>
    </ligand>
</feature>
<feature type="binding site" evidence="1">
    <location>
        <position position="522"/>
    </location>
    <ligand>
        <name>Mg(2+)</name>
        <dbReference type="ChEBI" id="CHEBI:18420"/>
    </ligand>
</feature>
<reference key="1">
    <citation type="journal article" date="2007" name="Proc. Natl. Acad. Sci. U.S.A.">
        <title>Deep-sea vent epsilon-proteobacterial genomes provide insights into emergence of pathogens.</title>
        <authorList>
            <person name="Nakagawa S."/>
            <person name="Takaki Y."/>
            <person name="Shimamura S."/>
            <person name="Reysenbach A.-L."/>
            <person name="Takai K."/>
            <person name="Horikoshi K."/>
        </authorList>
    </citation>
    <scope>NUCLEOTIDE SEQUENCE [LARGE SCALE GENOMIC DNA]</scope>
    <source>
        <strain>SB155-2</strain>
    </source>
</reference>